<dbReference type="EMBL" id="M11813">
    <property type="protein sequence ID" value="AAA88489.1"/>
    <property type="molecule type" value="Genomic_DNA"/>
</dbReference>
<dbReference type="PIR" id="G24831">
    <property type="entry name" value="WMBP12"/>
</dbReference>
<dbReference type="SMR" id="P07537"/>
<dbReference type="MEROPS" id="G02.001"/>
<dbReference type="Proteomes" id="UP000000855">
    <property type="component" value="Segment"/>
</dbReference>
<dbReference type="GO" id="GO:0098024">
    <property type="term" value="C:virus tail, fiber"/>
    <property type="evidence" value="ECO:0007669"/>
    <property type="project" value="UniProtKB-KW"/>
</dbReference>
<dbReference type="GO" id="GO:0005524">
    <property type="term" value="F:ATP binding"/>
    <property type="evidence" value="ECO:0007669"/>
    <property type="project" value="UniProtKB-KW"/>
</dbReference>
<dbReference type="GO" id="GO:0046872">
    <property type="term" value="F:metal ion binding"/>
    <property type="evidence" value="ECO:0007669"/>
    <property type="project" value="UniProtKB-KW"/>
</dbReference>
<dbReference type="GO" id="GO:0098671">
    <property type="term" value="P:adhesion receptor-mediated virion attachment to host cell"/>
    <property type="evidence" value="ECO:0007669"/>
    <property type="project" value="UniProtKB-KW"/>
</dbReference>
<dbReference type="GO" id="GO:0098994">
    <property type="term" value="P:symbiont entry into host cell via disruption of host cell envelope"/>
    <property type="evidence" value="ECO:0007669"/>
    <property type="project" value="UniProtKB-KW"/>
</dbReference>
<dbReference type="FunFam" id="2.160.10.20:FF:000001">
    <property type="entry name" value="Pre-neck appendage protein"/>
    <property type="match status" value="1"/>
</dbReference>
<dbReference type="Gene3D" id="2.40.300.10">
    <property type="entry name" value="Head decoration protein D"/>
    <property type="match status" value="1"/>
</dbReference>
<dbReference type="Gene3D" id="2.160.10.20">
    <property type="entry name" value="Insect antifreeze protein"/>
    <property type="match status" value="1"/>
</dbReference>
<dbReference type="Gene3D" id="2.160.20.10">
    <property type="entry name" value="Single-stranded right-handed beta-helix, Pectin lyase-like"/>
    <property type="match status" value="1"/>
</dbReference>
<dbReference type="Gene3D" id="4.10.80.40">
    <property type="entry name" value="succinate dehydrogenase protein domain"/>
    <property type="match status" value="1"/>
</dbReference>
<dbReference type="InterPro" id="IPR006626">
    <property type="entry name" value="PbH1"/>
</dbReference>
<dbReference type="InterPro" id="IPR012334">
    <property type="entry name" value="Pectin_lyas_fold"/>
</dbReference>
<dbReference type="InterPro" id="IPR011050">
    <property type="entry name" value="Pectin_lyase_fold/virulence"/>
</dbReference>
<dbReference type="InterPro" id="IPR021865">
    <property type="entry name" value="Peptidase_G2"/>
</dbReference>
<dbReference type="InterPro" id="IPR024535">
    <property type="entry name" value="RHGA/B-epi-like_pectate_lyase"/>
</dbReference>
<dbReference type="Pfam" id="PF12708">
    <property type="entry name" value="Pect-lyase_RHGA_epim"/>
    <property type="match status" value="1"/>
</dbReference>
<dbReference type="Pfam" id="PF11962">
    <property type="entry name" value="Peptidase_G2"/>
    <property type="match status" value="1"/>
</dbReference>
<dbReference type="SMART" id="SM00710">
    <property type="entry name" value="PbH1"/>
    <property type="match status" value="6"/>
</dbReference>
<dbReference type="SUPFAM" id="SSF51126">
    <property type="entry name" value="Pectin lyase-like"/>
    <property type="match status" value="1"/>
</dbReference>
<gene>
    <name type="primary">12</name>
</gene>
<accession>P07537</accession>
<organismHost>
    <name type="scientific">Bacillus subtilis</name>
    <dbReference type="NCBI Taxonomy" id="1423"/>
</organismHost>
<proteinExistence type="inferred from homology"/>
<keyword id="KW-0067">ATP-binding</keyword>
<keyword id="KW-1235">Degradation of host cell envelope components during virus entry</keyword>
<keyword id="KW-0945">Host-virus interaction</keyword>
<keyword id="KW-0426">Late protein</keyword>
<keyword id="KW-0460">Magnesium</keyword>
<keyword id="KW-0479">Metal-binding</keyword>
<keyword id="KW-0547">Nucleotide-binding</keyword>
<keyword id="KW-0677">Repeat</keyword>
<keyword id="KW-1233">Viral attachment to host adhesion receptor</keyword>
<keyword id="KW-1161">Viral attachment to host cell</keyword>
<keyword id="KW-1230">Viral tail fiber protein</keyword>
<keyword id="KW-1227">Viral tail protein</keyword>
<keyword id="KW-0946">Virion</keyword>
<keyword id="KW-1160">Virus entry into host cell</keyword>
<organism>
    <name type="scientific">Bacillus phage PZA</name>
    <name type="common">Bacteriophage PZA</name>
    <dbReference type="NCBI Taxonomy" id="10757"/>
    <lineage>
        <taxon>Viruses</taxon>
        <taxon>Duplodnaviria</taxon>
        <taxon>Heunggongvirae</taxon>
        <taxon>Uroviricota</taxon>
        <taxon>Caudoviricetes</taxon>
        <taxon>Salasmaviridae</taxon>
        <taxon>Picovirinae</taxon>
        <taxon>Salasvirus</taxon>
        <taxon>Salasvirus PZA</taxon>
    </lineage>
</organism>
<name>FIB12_BPPZA</name>
<protein>
    <recommendedName>
        <fullName evidence="1">Preneck appendage protein</fullName>
    </recommendedName>
    <alternativeName>
        <fullName evidence="1">Gene product 12</fullName>
        <shortName evidence="1">gp12</shortName>
    </alternativeName>
    <alternativeName>
        <fullName evidence="1">Protein p12</fullName>
    </alternativeName>
    <component>
        <recommendedName>
            <fullName evidence="1">gp12*</fullName>
        </recommendedName>
    </component>
</protein>
<evidence type="ECO:0000250" key="1">
    <source>
        <dbReference type="UniProtKB" id="P20345"/>
    </source>
</evidence>
<feature type="chain" id="PRO_0000106593" description="Preneck appendage protein">
    <location>
        <begin position="1"/>
        <end position="854"/>
    </location>
</feature>
<feature type="chain" id="PRO_0000436071" description="gp12*" evidence="1">
    <location>
        <begin position="1"/>
        <end position="691"/>
    </location>
</feature>
<feature type="active site" description="Nucleophile" evidence="1">
    <location>
        <position position="695"/>
    </location>
</feature>
<feature type="binding site" evidence="1">
    <location>
        <position position="285"/>
    </location>
    <ligand>
        <name>Mg(2+)</name>
        <dbReference type="ChEBI" id="CHEBI:18420"/>
    </ligand>
</feature>
<feature type="binding site" evidence="1">
    <location>
        <position position="310"/>
    </location>
    <ligand>
        <name>Mg(2+)</name>
        <dbReference type="ChEBI" id="CHEBI:18420"/>
    </ligand>
</feature>
<feature type="binding site" evidence="1">
    <location>
        <position position="312"/>
    </location>
    <ligand>
        <name>Mg(2+)</name>
        <dbReference type="ChEBI" id="CHEBI:18420"/>
    </ligand>
</feature>
<feature type="binding site" evidence="1">
    <location>
        <begin position="746"/>
        <end position="795"/>
    </location>
    <ligand>
        <name>ATP</name>
        <dbReference type="ChEBI" id="CHEBI:30616"/>
    </ligand>
</feature>
<feature type="site" description="Cleavage" evidence="1">
    <location>
        <begin position="691"/>
        <end position="692"/>
    </location>
</feature>
<comment type="function">
    <text evidence="1">Structural component of the 12 appendages that hang from the lower collar. Adhesion protein that binds to the host cell surface during virus attachment and mediates teichoic acids degradation.</text>
</comment>
<comment type="cofactor">
    <cofactor evidence="1">
        <name>Mg(2+)</name>
        <dbReference type="ChEBI" id="CHEBI:18420"/>
    </cofactor>
    <text evidence="1">Binds 1 zinc ion per subunit.</text>
</comment>
<comment type="subunit">
    <text evidence="1">Homotrimer. Each appendage is a homotrimer of gp12*.</text>
</comment>
<comment type="subcellular location">
    <subcellularLocation>
        <location evidence="1">Virion</location>
    </subcellularLocation>
    <text evidence="1">Present in 36 copies in the virion.</text>
</comment>
<comment type="domain">
    <text evidence="1">The N-terminus has three domains that function to attach the appendages to the phage, digest the cell wall teichoic acids, and bind irreversibly to the host. The C-terminus is an autochaperone that aids trimerization.</text>
</comment>
<comment type="PTM">
    <text evidence="1">Autocleaved to produce the 74 kDa gp12* assembly attached to the phage particles. Autocleavage of the C-terminus is a posttrimerization event that is followed by an ATP-dependent release.</text>
</comment>
<sequence length="854" mass="92073">MSTKPELKRFEQFGEIMVQLYERYLPTAFDESLTLLEKMNKIIHYLNEIGKVTNELIEEWNKVMEWILNDGLEDLVKETLERWYEEGKFADLVIQVIDELKQFGVSVKTYGAKGDGVTDDIKAFEKAIESGFPVYVPYGTFMVSRGIKLPSNTVLTGAGKRNAVIKFMDSVGRGESLMYNENVTTGNENIFLSSFTLDGNNKRLGQGISGIGGSRESNLSIRACHNVYIRDIEAVDCTLHGIDITCGGLDYPYLGDGTTAPNPSENIWIENCEATGFGDDGITTHHSQYINILNCYSHDPRLTANCNGFEIDDGSRHVVLSNNRSKGCYGGIEIKAHGDAPAAYNISVNGHMSVEDVRSYNFRHIGHHAATDPQSVSAKNIVASNLVSIRPNNKRGFQDNATPRVLAVSAYYGVVINGLTGYTDDPNLLTETVVSVQFRARNCSLNGVALTGFSNSENGIYVIGGSRGGDAVNISNVTLNNSGRYGVSIGSGIENVSITNISGIGDGINSPVALVSTINSNPEISGLSSIGYPTVARVAGTDYNDGLTLFNGAFRASTTSSGKIHSEGFIMGSTSGCEASVSKSGILTSSSSKTSSERSLIAGSSTSEATGTYNTILGSLGAVADEQFAGLISASQSRASGNHNLILSSYGINTVGSYKVNGGFEKINWELDSLNGRIKARDTVTGGNTWSDFAEYFESLDGQVIETGYLVTLDKGKIRKAEKGEKIIGVISETAGFVLGESSFEWQGAVLKNEFGGIVYEEVTTEDGVKFKRPLPNPDFDPNKNYIPRSQRREWHVVGLLGQIAVRIDDTVKQGQGIDAVGGVATDGNNFIVKEITTPYNKEKGYGVAIVLIK</sequence>
<reference key="1">
    <citation type="journal article" date="1986" name="Gene">
        <title>Nucleotide sequence of the late region of Bacillus subtilis phage PZA, a close relative of phi 29.</title>
        <authorList>
            <person name="Paces V."/>
            <person name="Vlcek C."/>
            <person name="Urbanek P."/>
        </authorList>
    </citation>
    <scope>NUCLEOTIDE SEQUENCE [GENOMIC DNA]</scope>
</reference>